<name>RL13_BORHD</name>
<proteinExistence type="inferred from homology"/>
<evidence type="ECO:0000255" key="1">
    <source>
        <dbReference type="HAMAP-Rule" id="MF_01366"/>
    </source>
</evidence>
<evidence type="ECO:0000305" key="2"/>
<reference key="1">
    <citation type="submission" date="2004-12" db="EMBL/GenBank/DDBJ databases">
        <title>The genome sequence of Borrelia hermsii and Borrelia turicatae: comparative analysis of two agents of endemic N. America relapsing fever.</title>
        <authorList>
            <person name="Porcella S.F."/>
            <person name="Raffel S.J."/>
            <person name="Schrumpf M.E."/>
            <person name="Montgomery B."/>
            <person name="Smith T."/>
            <person name="Schwan T.G."/>
        </authorList>
    </citation>
    <scope>NUCLEOTIDE SEQUENCE [LARGE SCALE GENOMIC DNA]</scope>
    <source>
        <strain>HS1 / DAH</strain>
    </source>
</reference>
<feature type="chain" id="PRO_1000144095" description="Large ribosomal subunit protein uL13">
    <location>
        <begin position="1"/>
        <end position="149"/>
    </location>
</feature>
<organism>
    <name type="scientific">Borrelia hermsii (strain HS1 / DAH)</name>
    <dbReference type="NCBI Taxonomy" id="314723"/>
    <lineage>
        <taxon>Bacteria</taxon>
        <taxon>Pseudomonadati</taxon>
        <taxon>Spirochaetota</taxon>
        <taxon>Spirochaetia</taxon>
        <taxon>Spirochaetales</taxon>
        <taxon>Borreliaceae</taxon>
        <taxon>Borrelia</taxon>
    </lineage>
</organism>
<accession>B2S046</accession>
<gene>
    <name evidence="1" type="primary">rplM</name>
    <name type="ordered locus">BH0339</name>
</gene>
<sequence>MNRITNNKTIWIKPKYVEKKWYVIDASDKVLGRIATEAVKILRGKHKPYYTPHQDLGDNVIIVNASKIRLTGKKYSQKIYYRHSRYPGGLYSDTFRTLSERKPTAPLEIAIKGMLPKGPLGRELFRNLKVFADSNHTLKAQNLYKLEAN</sequence>
<comment type="function">
    <text evidence="1">This protein is one of the early assembly proteins of the 50S ribosomal subunit, although it is not seen to bind rRNA by itself. It is important during the early stages of 50S assembly.</text>
</comment>
<comment type="subunit">
    <text evidence="1">Part of the 50S ribosomal subunit.</text>
</comment>
<comment type="similarity">
    <text evidence="1">Belongs to the universal ribosomal protein uL13 family.</text>
</comment>
<protein>
    <recommendedName>
        <fullName evidence="1">Large ribosomal subunit protein uL13</fullName>
    </recommendedName>
    <alternativeName>
        <fullName evidence="2">50S ribosomal protein L13</fullName>
    </alternativeName>
</protein>
<dbReference type="EMBL" id="CP000048">
    <property type="protein sequence ID" value="AAX16852.1"/>
    <property type="molecule type" value="Genomic_DNA"/>
</dbReference>
<dbReference type="RefSeq" id="WP_012422109.1">
    <property type="nucleotide sequence ID" value="NZ_CP073136.1"/>
</dbReference>
<dbReference type="SMR" id="B2S046"/>
<dbReference type="GeneID" id="71843149"/>
<dbReference type="KEGG" id="bhr:BH0339"/>
<dbReference type="HOGENOM" id="CLU_082184_2_2_12"/>
<dbReference type="Proteomes" id="UP000008834">
    <property type="component" value="Chromosome"/>
</dbReference>
<dbReference type="GO" id="GO:0022625">
    <property type="term" value="C:cytosolic large ribosomal subunit"/>
    <property type="evidence" value="ECO:0007669"/>
    <property type="project" value="TreeGrafter"/>
</dbReference>
<dbReference type="GO" id="GO:0003729">
    <property type="term" value="F:mRNA binding"/>
    <property type="evidence" value="ECO:0007669"/>
    <property type="project" value="TreeGrafter"/>
</dbReference>
<dbReference type="GO" id="GO:0003735">
    <property type="term" value="F:structural constituent of ribosome"/>
    <property type="evidence" value="ECO:0007669"/>
    <property type="project" value="InterPro"/>
</dbReference>
<dbReference type="GO" id="GO:0017148">
    <property type="term" value="P:negative regulation of translation"/>
    <property type="evidence" value="ECO:0007669"/>
    <property type="project" value="TreeGrafter"/>
</dbReference>
<dbReference type="GO" id="GO:0006412">
    <property type="term" value="P:translation"/>
    <property type="evidence" value="ECO:0007669"/>
    <property type="project" value="UniProtKB-UniRule"/>
</dbReference>
<dbReference type="CDD" id="cd00392">
    <property type="entry name" value="Ribosomal_L13"/>
    <property type="match status" value="1"/>
</dbReference>
<dbReference type="Gene3D" id="3.90.1180.10">
    <property type="entry name" value="Ribosomal protein L13"/>
    <property type="match status" value="1"/>
</dbReference>
<dbReference type="HAMAP" id="MF_01366">
    <property type="entry name" value="Ribosomal_uL13"/>
    <property type="match status" value="1"/>
</dbReference>
<dbReference type="InterPro" id="IPR005822">
    <property type="entry name" value="Ribosomal_uL13"/>
</dbReference>
<dbReference type="InterPro" id="IPR005823">
    <property type="entry name" value="Ribosomal_uL13_bac-type"/>
</dbReference>
<dbReference type="InterPro" id="IPR023563">
    <property type="entry name" value="Ribosomal_uL13_CS"/>
</dbReference>
<dbReference type="InterPro" id="IPR036899">
    <property type="entry name" value="Ribosomal_uL13_sf"/>
</dbReference>
<dbReference type="NCBIfam" id="TIGR01066">
    <property type="entry name" value="rplM_bact"/>
    <property type="match status" value="1"/>
</dbReference>
<dbReference type="PANTHER" id="PTHR11545:SF2">
    <property type="entry name" value="LARGE RIBOSOMAL SUBUNIT PROTEIN UL13M"/>
    <property type="match status" value="1"/>
</dbReference>
<dbReference type="PANTHER" id="PTHR11545">
    <property type="entry name" value="RIBOSOMAL PROTEIN L13"/>
    <property type="match status" value="1"/>
</dbReference>
<dbReference type="Pfam" id="PF00572">
    <property type="entry name" value="Ribosomal_L13"/>
    <property type="match status" value="1"/>
</dbReference>
<dbReference type="PIRSF" id="PIRSF002181">
    <property type="entry name" value="Ribosomal_L13"/>
    <property type="match status" value="1"/>
</dbReference>
<dbReference type="SUPFAM" id="SSF52161">
    <property type="entry name" value="Ribosomal protein L13"/>
    <property type="match status" value="1"/>
</dbReference>
<dbReference type="PROSITE" id="PS00783">
    <property type="entry name" value="RIBOSOMAL_L13"/>
    <property type="match status" value="1"/>
</dbReference>
<keyword id="KW-0687">Ribonucleoprotein</keyword>
<keyword id="KW-0689">Ribosomal protein</keyword>